<feature type="chain" id="PRO_1000018092" description="Arginine--tRNA ligase">
    <location>
        <begin position="1"/>
        <end position="578"/>
    </location>
</feature>
<feature type="short sequence motif" description="'HIGH' region">
    <location>
        <begin position="127"/>
        <end position="137"/>
    </location>
</feature>
<keyword id="KW-0030">Aminoacyl-tRNA synthetase</keyword>
<keyword id="KW-0067">ATP-binding</keyword>
<keyword id="KW-0963">Cytoplasm</keyword>
<keyword id="KW-0436">Ligase</keyword>
<keyword id="KW-0547">Nucleotide-binding</keyword>
<keyword id="KW-0648">Protein biosynthesis</keyword>
<accession>Q1IGB8</accession>
<name>SYR_PSEE4</name>
<gene>
    <name evidence="1" type="primary">argS</name>
    <name type="ordered locus">PSEEN0323</name>
</gene>
<sequence length="578" mass="63733">MKDTIRQLIQQALTQLVTEGVLPEGLTPAIQVENARDKTHGDFASNIAMMLAKPAGMKPRDLAEKIIAALPTSADISKAEIAGPGFLNFFQNTDALANRLDAALADDHLGVHKAGPVEKVVIDMSAPNLAKEMHVGHLRSTIIGDSVARVLEFLGDDVIRQNHVGDWGTQFGMLLAYLEENPITSDELSDLENFYRAAKKRFDESEEFATRARGLVVKLQAGDPDCLALWTRFKDISLSHCQKTYELLNVKLTMADVMGESAYNDDLANVVADLKSKGLLVESQGAQCVFLEEFKNTEGEPLPVIVQKADGGYLYATTDLAAVRYRSNTLQADRALYFVDQRQALHFNQVFEVARRAGFVGHPMKMEHMGFGTMNGADGRPFKTRDGGTVKLIDLLTEAKERAYALVKEKNPSLAEDELRKIGEVVGIGAVKYADLSKHRTSDYSFNFELMLNFEGNTAPYLLYAYTRVAGVFRKLGKGFDEVDGNIVLQAAHEQDLAARLAQFGEILNNVADKGTPHVLCSYLYDLAGLFSSFYENCPILAAETAEQQQSRLRLAALTGRTLKQGLELLGLETLERM</sequence>
<evidence type="ECO:0000255" key="1">
    <source>
        <dbReference type="HAMAP-Rule" id="MF_00123"/>
    </source>
</evidence>
<comment type="catalytic activity">
    <reaction evidence="1">
        <text>tRNA(Arg) + L-arginine + ATP = L-arginyl-tRNA(Arg) + AMP + diphosphate</text>
        <dbReference type="Rhea" id="RHEA:20301"/>
        <dbReference type="Rhea" id="RHEA-COMP:9658"/>
        <dbReference type="Rhea" id="RHEA-COMP:9673"/>
        <dbReference type="ChEBI" id="CHEBI:30616"/>
        <dbReference type="ChEBI" id="CHEBI:32682"/>
        <dbReference type="ChEBI" id="CHEBI:33019"/>
        <dbReference type="ChEBI" id="CHEBI:78442"/>
        <dbReference type="ChEBI" id="CHEBI:78513"/>
        <dbReference type="ChEBI" id="CHEBI:456215"/>
        <dbReference type="EC" id="6.1.1.19"/>
    </reaction>
</comment>
<comment type="subunit">
    <text evidence="1">Monomer.</text>
</comment>
<comment type="subcellular location">
    <subcellularLocation>
        <location evidence="1">Cytoplasm</location>
    </subcellularLocation>
</comment>
<comment type="similarity">
    <text evidence="1">Belongs to the class-I aminoacyl-tRNA synthetase family.</text>
</comment>
<organism>
    <name type="scientific">Pseudomonas entomophila (strain L48)</name>
    <dbReference type="NCBI Taxonomy" id="384676"/>
    <lineage>
        <taxon>Bacteria</taxon>
        <taxon>Pseudomonadati</taxon>
        <taxon>Pseudomonadota</taxon>
        <taxon>Gammaproteobacteria</taxon>
        <taxon>Pseudomonadales</taxon>
        <taxon>Pseudomonadaceae</taxon>
        <taxon>Pseudomonas</taxon>
    </lineage>
</organism>
<protein>
    <recommendedName>
        <fullName evidence="1">Arginine--tRNA ligase</fullName>
        <ecNumber evidence="1">6.1.1.19</ecNumber>
    </recommendedName>
    <alternativeName>
        <fullName evidence="1">Arginyl-tRNA synthetase</fullName>
        <shortName evidence="1">ArgRS</shortName>
    </alternativeName>
</protein>
<dbReference type="EC" id="6.1.1.19" evidence="1"/>
<dbReference type="EMBL" id="CT573326">
    <property type="protein sequence ID" value="CAK13284.1"/>
    <property type="molecule type" value="Genomic_DNA"/>
</dbReference>
<dbReference type="RefSeq" id="WP_011531744.1">
    <property type="nucleotide sequence ID" value="NC_008027.1"/>
</dbReference>
<dbReference type="SMR" id="Q1IGB8"/>
<dbReference type="STRING" id="384676.PSEEN0323"/>
<dbReference type="GeneID" id="32803665"/>
<dbReference type="KEGG" id="pen:PSEEN0323"/>
<dbReference type="eggNOG" id="COG0018">
    <property type="taxonomic scope" value="Bacteria"/>
</dbReference>
<dbReference type="HOGENOM" id="CLU_006406_5_1_6"/>
<dbReference type="OrthoDB" id="9803211at2"/>
<dbReference type="Proteomes" id="UP000000658">
    <property type="component" value="Chromosome"/>
</dbReference>
<dbReference type="GO" id="GO:0005737">
    <property type="term" value="C:cytoplasm"/>
    <property type="evidence" value="ECO:0007669"/>
    <property type="project" value="UniProtKB-SubCell"/>
</dbReference>
<dbReference type="GO" id="GO:0004814">
    <property type="term" value="F:arginine-tRNA ligase activity"/>
    <property type="evidence" value="ECO:0007669"/>
    <property type="project" value="UniProtKB-UniRule"/>
</dbReference>
<dbReference type="GO" id="GO:0005524">
    <property type="term" value="F:ATP binding"/>
    <property type="evidence" value="ECO:0007669"/>
    <property type="project" value="UniProtKB-UniRule"/>
</dbReference>
<dbReference type="GO" id="GO:0006420">
    <property type="term" value="P:arginyl-tRNA aminoacylation"/>
    <property type="evidence" value="ECO:0007669"/>
    <property type="project" value="UniProtKB-UniRule"/>
</dbReference>
<dbReference type="CDD" id="cd00671">
    <property type="entry name" value="ArgRS_core"/>
    <property type="match status" value="1"/>
</dbReference>
<dbReference type="FunFam" id="3.30.1360.70:FF:000003">
    <property type="entry name" value="Arginine--tRNA ligase"/>
    <property type="match status" value="1"/>
</dbReference>
<dbReference type="FunFam" id="3.40.50.620:FF:000030">
    <property type="entry name" value="Arginine--tRNA ligase"/>
    <property type="match status" value="1"/>
</dbReference>
<dbReference type="FunFam" id="1.10.730.10:FF:000006">
    <property type="entry name" value="Arginyl-tRNA synthetase 2, mitochondrial"/>
    <property type="match status" value="1"/>
</dbReference>
<dbReference type="Gene3D" id="3.30.1360.70">
    <property type="entry name" value="Arginyl tRNA synthetase N-terminal domain"/>
    <property type="match status" value="1"/>
</dbReference>
<dbReference type="Gene3D" id="3.40.50.620">
    <property type="entry name" value="HUPs"/>
    <property type="match status" value="1"/>
</dbReference>
<dbReference type="Gene3D" id="1.10.730.10">
    <property type="entry name" value="Isoleucyl-tRNA Synthetase, Domain 1"/>
    <property type="match status" value="1"/>
</dbReference>
<dbReference type="HAMAP" id="MF_00123">
    <property type="entry name" value="Arg_tRNA_synth"/>
    <property type="match status" value="1"/>
</dbReference>
<dbReference type="InterPro" id="IPR001412">
    <property type="entry name" value="aa-tRNA-synth_I_CS"/>
</dbReference>
<dbReference type="InterPro" id="IPR001278">
    <property type="entry name" value="Arg-tRNA-ligase"/>
</dbReference>
<dbReference type="InterPro" id="IPR005148">
    <property type="entry name" value="Arg-tRNA-synth_N"/>
</dbReference>
<dbReference type="InterPro" id="IPR036695">
    <property type="entry name" value="Arg-tRNA-synth_N_sf"/>
</dbReference>
<dbReference type="InterPro" id="IPR035684">
    <property type="entry name" value="ArgRS_core"/>
</dbReference>
<dbReference type="InterPro" id="IPR008909">
    <property type="entry name" value="DALR_anticod-bd"/>
</dbReference>
<dbReference type="InterPro" id="IPR014729">
    <property type="entry name" value="Rossmann-like_a/b/a_fold"/>
</dbReference>
<dbReference type="InterPro" id="IPR009080">
    <property type="entry name" value="tRNAsynth_Ia_anticodon-bd"/>
</dbReference>
<dbReference type="NCBIfam" id="TIGR00456">
    <property type="entry name" value="argS"/>
    <property type="match status" value="1"/>
</dbReference>
<dbReference type="PANTHER" id="PTHR11956:SF5">
    <property type="entry name" value="ARGININE--TRNA LIGASE, CYTOPLASMIC"/>
    <property type="match status" value="1"/>
</dbReference>
<dbReference type="PANTHER" id="PTHR11956">
    <property type="entry name" value="ARGINYL-TRNA SYNTHETASE"/>
    <property type="match status" value="1"/>
</dbReference>
<dbReference type="Pfam" id="PF03485">
    <property type="entry name" value="Arg_tRNA_synt_N"/>
    <property type="match status" value="1"/>
</dbReference>
<dbReference type="Pfam" id="PF05746">
    <property type="entry name" value="DALR_1"/>
    <property type="match status" value="1"/>
</dbReference>
<dbReference type="Pfam" id="PF00750">
    <property type="entry name" value="tRNA-synt_1d"/>
    <property type="match status" value="1"/>
</dbReference>
<dbReference type="PRINTS" id="PR01038">
    <property type="entry name" value="TRNASYNTHARG"/>
</dbReference>
<dbReference type="SMART" id="SM01016">
    <property type="entry name" value="Arg_tRNA_synt_N"/>
    <property type="match status" value="1"/>
</dbReference>
<dbReference type="SMART" id="SM00836">
    <property type="entry name" value="DALR_1"/>
    <property type="match status" value="1"/>
</dbReference>
<dbReference type="SUPFAM" id="SSF47323">
    <property type="entry name" value="Anticodon-binding domain of a subclass of class I aminoacyl-tRNA synthetases"/>
    <property type="match status" value="1"/>
</dbReference>
<dbReference type="SUPFAM" id="SSF55190">
    <property type="entry name" value="Arginyl-tRNA synthetase (ArgRS), N-terminal 'additional' domain"/>
    <property type="match status" value="1"/>
</dbReference>
<dbReference type="SUPFAM" id="SSF52374">
    <property type="entry name" value="Nucleotidylyl transferase"/>
    <property type="match status" value="1"/>
</dbReference>
<dbReference type="PROSITE" id="PS00178">
    <property type="entry name" value="AA_TRNA_LIGASE_I"/>
    <property type="match status" value="1"/>
</dbReference>
<proteinExistence type="inferred from homology"/>
<reference key="1">
    <citation type="journal article" date="2006" name="Nat. Biotechnol.">
        <title>Complete genome sequence of the entomopathogenic and metabolically versatile soil bacterium Pseudomonas entomophila.</title>
        <authorList>
            <person name="Vodovar N."/>
            <person name="Vallenet D."/>
            <person name="Cruveiller S."/>
            <person name="Rouy Z."/>
            <person name="Barbe V."/>
            <person name="Acosta C."/>
            <person name="Cattolico L."/>
            <person name="Jubin C."/>
            <person name="Lajus A."/>
            <person name="Segurens B."/>
            <person name="Vacherie B."/>
            <person name="Wincker P."/>
            <person name="Weissenbach J."/>
            <person name="Lemaitre B."/>
            <person name="Medigue C."/>
            <person name="Boccard F."/>
        </authorList>
    </citation>
    <scope>NUCLEOTIDE SEQUENCE [LARGE SCALE GENOMIC DNA]</scope>
    <source>
        <strain>L48</strain>
    </source>
</reference>